<evidence type="ECO:0000255" key="1">
    <source>
        <dbReference type="HAMAP-Rule" id="MF_00636"/>
    </source>
</evidence>
<name>Y272_CARHZ</name>
<sequence length="289" mass="33459">MRFLIVTGLSGAGKTQAMRALEDLGYFCVDNLPPVLMPKFAELVAHAENKIEKVALVVDVRGQKFFQDLDWALGELTKLGIKYEILFLEARDEVLLKRFKANRRGHPLGVRGSQILDNIKKERKFLENLRARADKVIDTSDLQPADLRNEILNYYGEEQKRSKISINIVTFGYKYGLPLDADLIMDVRFLPNPFYVKELRPLSGSDKPVYDYVFNYEVTKKFTEKFLDLIEFLMPFYQKEGKSNLVIAIGCTGGRHRSVAIANFLARTLEEKNYEVYLRHRDLEKHREE</sequence>
<reference key="1">
    <citation type="journal article" date="2005" name="PLoS Genet.">
        <title>Life in hot carbon monoxide: the complete genome sequence of Carboxydothermus hydrogenoformans Z-2901.</title>
        <authorList>
            <person name="Wu M."/>
            <person name="Ren Q."/>
            <person name="Durkin A.S."/>
            <person name="Daugherty S.C."/>
            <person name="Brinkac L.M."/>
            <person name="Dodson R.J."/>
            <person name="Madupu R."/>
            <person name="Sullivan S.A."/>
            <person name="Kolonay J.F."/>
            <person name="Nelson W.C."/>
            <person name="Tallon L.J."/>
            <person name="Jones K.M."/>
            <person name="Ulrich L.E."/>
            <person name="Gonzalez J.M."/>
            <person name="Zhulin I.B."/>
            <person name="Robb F.T."/>
            <person name="Eisen J.A."/>
        </authorList>
    </citation>
    <scope>NUCLEOTIDE SEQUENCE [LARGE SCALE GENOMIC DNA]</scope>
    <source>
        <strain>ATCC BAA-161 / DSM 6008 / Z-2901</strain>
    </source>
</reference>
<accession>Q3AFE0</accession>
<comment type="function">
    <text evidence="1">Displays ATPase and GTPase activities.</text>
</comment>
<comment type="similarity">
    <text evidence="1">Belongs to the RapZ-like family.</text>
</comment>
<dbReference type="EMBL" id="CP000141">
    <property type="protein sequence ID" value="ABB15130.1"/>
    <property type="molecule type" value="Genomic_DNA"/>
</dbReference>
<dbReference type="SMR" id="Q3AFE0"/>
<dbReference type="FunCoup" id="Q3AFE0">
    <property type="interactions" value="171"/>
</dbReference>
<dbReference type="STRING" id="246194.CHY_0272"/>
<dbReference type="KEGG" id="chy:CHY_0272"/>
<dbReference type="eggNOG" id="COG1660">
    <property type="taxonomic scope" value="Bacteria"/>
</dbReference>
<dbReference type="HOGENOM" id="CLU_059558_0_0_9"/>
<dbReference type="InParanoid" id="Q3AFE0"/>
<dbReference type="OrthoDB" id="9784461at2"/>
<dbReference type="Proteomes" id="UP000002706">
    <property type="component" value="Chromosome"/>
</dbReference>
<dbReference type="GO" id="GO:0005524">
    <property type="term" value="F:ATP binding"/>
    <property type="evidence" value="ECO:0007669"/>
    <property type="project" value="UniProtKB-UniRule"/>
</dbReference>
<dbReference type="GO" id="GO:0005525">
    <property type="term" value="F:GTP binding"/>
    <property type="evidence" value="ECO:0007669"/>
    <property type="project" value="UniProtKB-UniRule"/>
</dbReference>
<dbReference type="Gene3D" id="3.40.50.300">
    <property type="entry name" value="P-loop containing nucleotide triphosphate hydrolases"/>
    <property type="match status" value="1"/>
</dbReference>
<dbReference type="HAMAP" id="MF_00636">
    <property type="entry name" value="RapZ_like"/>
    <property type="match status" value="1"/>
</dbReference>
<dbReference type="InterPro" id="IPR027417">
    <property type="entry name" value="P-loop_NTPase"/>
</dbReference>
<dbReference type="InterPro" id="IPR005337">
    <property type="entry name" value="RapZ-like"/>
</dbReference>
<dbReference type="InterPro" id="IPR053930">
    <property type="entry name" value="RapZ-like_N"/>
</dbReference>
<dbReference type="InterPro" id="IPR053931">
    <property type="entry name" value="RapZ_C"/>
</dbReference>
<dbReference type="NCBIfam" id="NF003828">
    <property type="entry name" value="PRK05416.1"/>
    <property type="match status" value="1"/>
</dbReference>
<dbReference type="PANTHER" id="PTHR30448">
    <property type="entry name" value="RNASE ADAPTER PROTEIN RAPZ"/>
    <property type="match status" value="1"/>
</dbReference>
<dbReference type="PANTHER" id="PTHR30448:SF0">
    <property type="entry name" value="RNASE ADAPTER PROTEIN RAPZ"/>
    <property type="match status" value="1"/>
</dbReference>
<dbReference type="Pfam" id="PF22740">
    <property type="entry name" value="PapZ_C"/>
    <property type="match status" value="1"/>
</dbReference>
<dbReference type="Pfam" id="PF03668">
    <property type="entry name" value="RapZ-like_N"/>
    <property type="match status" value="1"/>
</dbReference>
<dbReference type="PIRSF" id="PIRSF005052">
    <property type="entry name" value="P-loopkin"/>
    <property type="match status" value="1"/>
</dbReference>
<dbReference type="SUPFAM" id="SSF52540">
    <property type="entry name" value="P-loop containing nucleoside triphosphate hydrolases"/>
    <property type="match status" value="1"/>
</dbReference>
<keyword id="KW-0067">ATP-binding</keyword>
<keyword id="KW-0342">GTP-binding</keyword>
<keyword id="KW-0547">Nucleotide-binding</keyword>
<keyword id="KW-1185">Reference proteome</keyword>
<feature type="chain" id="PRO_0000258951" description="Nucleotide-binding protein CHY_0272">
    <location>
        <begin position="1"/>
        <end position="289"/>
    </location>
</feature>
<feature type="binding site" evidence="1">
    <location>
        <begin position="8"/>
        <end position="15"/>
    </location>
    <ligand>
        <name>ATP</name>
        <dbReference type="ChEBI" id="CHEBI:30616"/>
    </ligand>
</feature>
<feature type="binding site" evidence="1">
    <location>
        <begin position="59"/>
        <end position="62"/>
    </location>
    <ligand>
        <name>GTP</name>
        <dbReference type="ChEBI" id="CHEBI:37565"/>
    </ligand>
</feature>
<organism>
    <name type="scientific">Carboxydothermus hydrogenoformans (strain ATCC BAA-161 / DSM 6008 / Z-2901)</name>
    <dbReference type="NCBI Taxonomy" id="246194"/>
    <lineage>
        <taxon>Bacteria</taxon>
        <taxon>Bacillati</taxon>
        <taxon>Bacillota</taxon>
        <taxon>Clostridia</taxon>
        <taxon>Thermoanaerobacterales</taxon>
        <taxon>Thermoanaerobacteraceae</taxon>
        <taxon>Carboxydothermus</taxon>
    </lineage>
</organism>
<gene>
    <name type="ordered locus">CHY_0272</name>
</gene>
<proteinExistence type="inferred from homology"/>
<protein>
    <recommendedName>
        <fullName evidence="1">Nucleotide-binding protein CHY_0272</fullName>
    </recommendedName>
</protein>